<protein>
    <recommendedName>
        <fullName evidence="1">Adenylate kinase</fullName>
        <shortName evidence="1">AK</shortName>
        <ecNumber evidence="1">2.7.4.3</ecNumber>
    </recommendedName>
    <alternativeName>
        <fullName evidence="1">ATP-AMP transphosphorylase</fullName>
    </alternativeName>
    <alternativeName>
        <fullName evidence="1">ATP:AMP phosphotransferase</fullName>
    </alternativeName>
    <alternativeName>
        <fullName evidence="1">Adenylate monophosphate kinase</fullName>
    </alternativeName>
</protein>
<accession>A8ZTL5</accession>
<proteinExistence type="inferred from homology"/>
<name>KAD_DESOH</name>
<comment type="function">
    <text evidence="1">Catalyzes the reversible transfer of the terminal phosphate group between ATP and AMP. Plays an important role in cellular energy homeostasis and in adenine nucleotide metabolism.</text>
</comment>
<comment type="catalytic activity">
    <reaction evidence="1">
        <text>AMP + ATP = 2 ADP</text>
        <dbReference type="Rhea" id="RHEA:12973"/>
        <dbReference type="ChEBI" id="CHEBI:30616"/>
        <dbReference type="ChEBI" id="CHEBI:456215"/>
        <dbReference type="ChEBI" id="CHEBI:456216"/>
        <dbReference type="EC" id="2.7.4.3"/>
    </reaction>
</comment>
<comment type="pathway">
    <text evidence="1">Purine metabolism; AMP biosynthesis via salvage pathway; AMP from ADP: step 1/1.</text>
</comment>
<comment type="subunit">
    <text evidence="1">Monomer.</text>
</comment>
<comment type="subcellular location">
    <subcellularLocation>
        <location evidence="1">Cytoplasm</location>
    </subcellularLocation>
</comment>
<comment type="domain">
    <text evidence="1">Consists of three domains, a large central CORE domain and two small peripheral domains, NMPbind and LID, which undergo movements during catalysis. The LID domain closes over the site of phosphoryl transfer upon ATP binding. Assembling and dissambling the active center during each catalytic cycle provides an effective means to prevent ATP hydrolysis.</text>
</comment>
<comment type="similarity">
    <text evidence="1">Belongs to the adenylate kinase family.</text>
</comment>
<gene>
    <name evidence="1" type="primary">adk</name>
    <name type="ordered locus">Dole_0469</name>
</gene>
<organism>
    <name type="scientific">Desulfosudis oleivorans (strain DSM 6200 / JCM 39069 / Hxd3)</name>
    <name type="common">Desulfococcus oleovorans</name>
    <dbReference type="NCBI Taxonomy" id="96561"/>
    <lineage>
        <taxon>Bacteria</taxon>
        <taxon>Pseudomonadati</taxon>
        <taxon>Thermodesulfobacteriota</taxon>
        <taxon>Desulfobacteria</taxon>
        <taxon>Desulfobacterales</taxon>
        <taxon>Desulfosudaceae</taxon>
        <taxon>Desulfosudis</taxon>
    </lineage>
</organism>
<evidence type="ECO:0000255" key="1">
    <source>
        <dbReference type="HAMAP-Rule" id="MF_00235"/>
    </source>
</evidence>
<keyword id="KW-0067">ATP-binding</keyword>
<keyword id="KW-0963">Cytoplasm</keyword>
<keyword id="KW-0418">Kinase</keyword>
<keyword id="KW-0545">Nucleotide biosynthesis</keyword>
<keyword id="KW-0547">Nucleotide-binding</keyword>
<keyword id="KW-1185">Reference proteome</keyword>
<keyword id="KW-0808">Transferase</keyword>
<reference key="1">
    <citation type="submission" date="2007-10" db="EMBL/GenBank/DDBJ databases">
        <title>Complete sequence of Desulfococcus oleovorans Hxd3.</title>
        <authorList>
            <consortium name="US DOE Joint Genome Institute"/>
            <person name="Copeland A."/>
            <person name="Lucas S."/>
            <person name="Lapidus A."/>
            <person name="Barry K."/>
            <person name="Glavina del Rio T."/>
            <person name="Dalin E."/>
            <person name="Tice H."/>
            <person name="Pitluck S."/>
            <person name="Kiss H."/>
            <person name="Brettin T."/>
            <person name="Bruce D."/>
            <person name="Detter J.C."/>
            <person name="Han C."/>
            <person name="Schmutz J."/>
            <person name="Larimer F."/>
            <person name="Land M."/>
            <person name="Hauser L."/>
            <person name="Kyrpides N."/>
            <person name="Kim E."/>
            <person name="Wawrik B."/>
            <person name="Richardson P."/>
        </authorList>
    </citation>
    <scope>NUCLEOTIDE SEQUENCE [LARGE SCALE GENOMIC DNA]</scope>
    <source>
        <strain>DSM 6200 / JCM 39069 / Hxd3</strain>
    </source>
</reference>
<sequence length="224" mass="24744">MNILFFGPNGSGKGTQGAILKEKYSLPHIESGAIFRENISKGTELGAKAKEYIDRGDLVPDDITIPMILDRLQQDDCKKGWLLDGFPRNKVQAETLDATLKKANMALDIVVEIELDREIAKNRIMGRRLCVNDNNHPNNIFIDAIKPDGDKCRVCGGELKTRSDDQDEAAIDKRHNIYYDTETGTLAAAYYFRDLAAKGGSLKYITLDGAPGVKEVAAELVSKL</sequence>
<dbReference type="EC" id="2.7.4.3" evidence="1"/>
<dbReference type="EMBL" id="CP000859">
    <property type="protein sequence ID" value="ABW66279.1"/>
    <property type="molecule type" value="Genomic_DNA"/>
</dbReference>
<dbReference type="RefSeq" id="WP_012173898.1">
    <property type="nucleotide sequence ID" value="NC_009943.1"/>
</dbReference>
<dbReference type="SMR" id="A8ZTL5"/>
<dbReference type="STRING" id="96561.Dole_0469"/>
<dbReference type="KEGG" id="dol:Dole_0469"/>
<dbReference type="eggNOG" id="COG0563">
    <property type="taxonomic scope" value="Bacteria"/>
</dbReference>
<dbReference type="HOGENOM" id="CLU_032354_1_2_7"/>
<dbReference type="OrthoDB" id="9805030at2"/>
<dbReference type="UniPathway" id="UPA00588">
    <property type="reaction ID" value="UER00649"/>
</dbReference>
<dbReference type="Proteomes" id="UP000008561">
    <property type="component" value="Chromosome"/>
</dbReference>
<dbReference type="GO" id="GO:0005737">
    <property type="term" value="C:cytoplasm"/>
    <property type="evidence" value="ECO:0007669"/>
    <property type="project" value="UniProtKB-SubCell"/>
</dbReference>
<dbReference type="GO" id="GO:0004017">
    <property type="term" value="F:adenylate kinase activity"/>
    <property type="evidence" value="ECO:0007669"/>
    <property type="project" value="UniProtKB-UniRule"/>
</dbReference>
<dbReference type="GO" id="GO:0005524">
    <property type="term" value="F:ATP binding"/>
    <property type="evidence" value="ECO:0007669"/>
    <property type="project" value="UniProtKB-UniRule"/>
</dbReference>
<dbReference type="GO" id="GO:0044209">
    <property type="term" value="P:AMP salvage"/>
    <property type="evidence" value="ECO:0007669"/>
    <property type="project" value="UniProtKB-UniRule"/>
</dbReference>
<dbReference type="CDD" id="cd01428">
    <property type="entry name" value="ADK"/>
    <property type="match status" value="1"/>
</dbReference>
<dbReference type="Gene3D" id="3.40.50.300">
    <property type="entry name" value="P-loop containing nucleotide triphosphate hydrolases"/>
    <property type="match status" value="1"/>
</dbReference>
<dbReference type="HAMAP" id="MF_00235">
    <property type="entry name" value="Adenylate_kinase_Adk"/>
    <property type="match status" value="1"/>
</dbReference>
<dbReference type="InterPro" id="IPR006259">
    <property type="entry name" value="Adenyl_kin_sub"/>
</dbReference>
<dbReference type="InterPro" id="IPR000850">
    <property type="entry name" value="Adenylat/UMP-CMP_kin"/>
</dbReference>
<dbReference type="InterPro" id="IPR033690">
    <property type="entry name" value="Adenylat_kinase_CS"/>
</dbReference>
<dbReference type="InterPro" id="IPR027417">
    <property type="entry name" value="P-loop_NTPase"/>
</dbReference>
<dbReference type="NCBIfam" id="TIGR01351">
    <property type="entry name" value="adk"/>
    <property type="match status" value="1"/>
</dbReference>
<dbReference type="NCBIfam" id="NF011102">
    <property type="entry name" value="PRK14529.1"/>
    <property type="match status" value="1"/>
</dbReference>
<dbReference type="PANTHER" id="PTHR23359">
    <property type="entry name" value="NUCLEOTIDE KINASE"/>
    <property type="match status" value="1"/>
</dbReference>
<dbReference type="Pfam" id="PF00406">
    <property type="entry name" value="ADK"/>
    <property type="match status" value="1"/>
</dbReference>
<dbReference type="PRINTS" id="PR00094">
    <property type="entry name" value="ADENYLTKNASE"/>
</dbReference>
<dbReference type="SUPFAM" id="SSF52540">
    <property type="entry name" value="P-loop containing nucleoside triphosphate hydrolases"/>
    <property type="match status" value="1"/>
</dbReference>
<dbReference type="PROSITE" id="PS00113">
    <property type="entry name" value="ADENYLATE_KINASE"/>
    <property type="match status" value="1"/>
</dbReference>
<feature type="chain" id="PRO_1000100558" description="Adenylate kinase">
    <location>
        <begin position="1"/>
        <end position="224"/>
    </location>
</feature>
<feature type="region of interest" description="NMP" evidence="1">
    <location>
        <begin position="30"/>
        <end position="59"/>
    </location>
</feature>
<feature type="region of interest" description="LID" evidence="1">
    <location>
        <begin position="126"/>
        <end position="165"/>
    </location>
</feature>
<feature type="binding site" evidence="1">
    <location>
        <begin position="10"/>
        <end position="15"/>
    </location>
    <ligand>
        <name>ATP</name>
        <dbReference type="ChEBI" id="CHEBI:30616"/>
    </ligand>
</feature>
<feature type="binding site" evidence="1">
    <location>
        <position position="31"/>
    </location>
    <ligand>
        <name>AMP</name>
        <dbReference type="ChEBI" id="CHEBI:456215"/>
    </ligand>
</feature>
<feature type="binding site" evidence="1">
    <location>
        <position position="36"/>
    </location>
    <ligand>
        <name>AMP</name>
        <dbReference type="ChEBI" id="CHEBI:456215"/>
    </ligand>
</feature>
<feature type="binding site" evidence="1">
    <location>
        <begin position="57"/>
        <end position="59"/>
    </location>
    <ligand>
        <name>AMP</name>
        <dbReference type="ChEBI" id="CHEBI:456215"/>
    </ligand>
</feature>
<feature type="binding site" evidence="1">
    <location>
        <begin position="85"/>
        <end position="88"/>
    </location>
    <ligand>
        <name>AMP</name>
        <dbReference type="ChEBI" id="CHEBI:456215"/>
    </ligand>
</feature>
<feature type="binding site" evidence="1">
    <location>
        <position position="92"/>
    </location>
    <ligand>
        <name>AMP</name>
        <dbReference type="ChEBI" id="CHEBI:456215"/>
    </ligand>
</feature>
<feature type="binding site" evidence="1">
    <location>
        <position position="127"/>
    </location>
    <ligand>
        <name>ATP</name>
        <dbReference type="ChEBI" id="CHEBI:30616"/>
    </ligand>
</feature>
<feature type="binding site" evidence="1">
    <location>
        <position position="162"/>
    </location>
    <ligand>
        <name>AMP</name>
        <dbReference type="ChEBI" id="CHEBI:456215"/>
    </ligand>
</feature>
<feature type="binding site" evidence="1">
    <location>
        <position position="174"/>
    </location>
    <ligand>
        <name>AMP</name>
        <dbReference type="ChEBI" id="CHEBI:456215"/>
    </ligand>
</feature>
<feature type="binding site" evidence="1">
    <location>
        <position position="211"/>
    </location>
    <ligand>
        <name>ATP</name>
        <dbReference type="ChEBI" id="CHEBI:30616"/>
    </ligand>
</feature>